<sequence length="480" mass="53883">MTRPLRLHPDRLFPADAGTRDIARRLYGSVKDLPIISPHGHTDPEWFAGDAPFPDATNLFLAPDHYLYRMLYSQGVPLDRLGVPSKAGPSPADPREAWRMLASNMHLFRGTPSSMWLNHVFGEVFGFEIELSAETADLYFDRIGEALQSPAFRPRALFERFNIELLATTESPTDDLRHHKAMRASGWKGRVVTAYRPDPVIDAEHEDFRASLSRFGELTGQDVESWSGYLQAHRMRRAAFMEMGATSTDHGHPTAATADLSLADAEALFRKLLSADFSPADAELFRAQMLTEMARMSLDDGLVMQIHPGSFRNHNAGLFARYGRDKGADIPTRTDYVRALKPLLDRFGNERGLSVIVFTLDESSYARELAPLAGHYPVLKLGPAWWFHDSPEGMRRFREQTTETAGFYNTVGFNDDTRAFLSIPARHDVARRIDAGFLARLVAEHRLSEDDAHETAVDLAYNLPKRAYKLDEPARTPAAA</sequence>
<evidence type="ECO:0000255" key="1">
    <source>
        <dbReference type="HAMAP-Rule" id="MF_00675"/>
    </source>
</evidence>
<organism>
    <name type="scientific">Phenylobacterium zucineum (strain HLK1)</name>
    <dbReference type="NCBI Taxonomy" id="450851"/>
    <lineage>
        <taxon>Bacteria</taxon>
        <taxon>Pseudomonadati</taxon>
        <taxon>Pseudomonadota</taxon>
        <taxon>Alphaproteobacteria</taxon>
        <taxon>Caulobacterales</taxon>
        <taxon>Caulobacteraceae</taxon>
        <taxon>Phenylobacterium</taxon>
    </lineage>
</organism>
<feature type="chain" id="PRO_1000131599" description="Uronate isomerase">
    <location>
        <begin position="1"/>
        <end position="480"/>
    </location>
</feature>
<reference key="1">
    <citation type="journal article" date="2008" name="BMC Genomics">
        <title>Complete genome of Phenylobacterium zucineum - a novel facultative intracellular bacterium isolated from human erythroleukemia cell line K562.</title>
        <authorList>
            <person name="Luo Y."/>
            <person name="Xu X."/>
            <person name="Ding Z."/>
            <person name="Liu Z."/>
            <person name="Zhang B."/>
            <person name="Yan Z."/>
            <person name="Sun J."/>
            <person name="Hu S."/>
            <person name="Hu X."/>
        </authorList>
    </citation>
    <scope>NUCLEOTIDE SEQUENCE [LARGE SCALE GENOMIC DNA]</scope>
    <source>
        <strain>HLK1</strain>
    </source>
</reference>
<name>UXAC_PHEZH</name>
<keyword id="KW-0413">Isomerase</keyword>
<keyword id="KW-1185">Reference proteome</keyword>
<protein>
    <recommendedName>
        <fullName evidence="1">Uronate isomerase</fullName>
        <ecNumber evidence="1">5.3.1.12</ecNumber>
    </recommendedName>
    <alternativeName>
        <fullName evidence="1">Glucuronate isomerase</fullName>
    </alternativeName>
    <alternativeName>
        <fullName evidence="1">Uronic isomerase</fullName>
    </alternativeName>
</protein>
<accession>B4RGF5</accession>
<proteinExistence type="inferred from homology"/>
<comment type="catalytic activity">
    <reaction evidence="1">
        <text>D-glucuronate = D-fructuronate</text>
        <dbReference type="Rhea" id="RHEA:13049"/>
        <dbReference type="ChEBI" id="CHEBI:58720"/>
        <dbReference type="ChEBI" id="CHEBI:59863"/>
        <dbReference type="EC" id="5.3.1.12"/>
    </reaction>
</comment>
<comment type="catalytic activity">
    <reaction evidence="1">
        <text>aldehydo-D-galacturonate = keto-D-tagaturonate</text>
        <dbReference type="Rhea" id="RHEA:27702"/>
        <dbReference type="ChEBI" id="CHEBI:12952"/>
        <dbReference type="ChEBI" id="CHEBI:17886"/>
        <dbReference type="EC" id="5.3.1.12"/>
    </reaction>
</comment>
<comment type="pathway">
    <text evidence="1">Carbohydrate metabolism; pentose and glucuronate interconversion.</text>
</comment>
<comment type="similarity">
    <text evidence="1">Belongs to the metallo-dependent hydrolases superfamily. Uronate isomerase family.</text>
</comment>
<dbReference type="EC" id="5.3.1.12" evidence="1"/>
<dbReference type="EMBL" id="CP000747">
    <property type="protein sequence ID" value="ACG78861.1"/>
    <property type="molecule type" value="Genomic_DNA"/>
</dbReference>
<dbReference type="RefSeq" id="WP_012522999.1">
    <property type="nucleotide sequence ID" value="NC_011144.1"/>
</dbReference>
<dbReference type="SMR" id="B4RGF5"/>
<dbReference type="STRING" id="450851.PHZ_c2452"/>
<dbReference type="KEGG" id="pzu:PHZ_c2452"/>
<dbReference type="eggNOG" id="COG1904">
    <property type="taxonomic scope" value="Bacteria"/>
</dbReference>
<dbReference type="HOGENOM" id="CLU_044465_0_0_5"/>
<dbReference type="OrthoDB" id="9766564at2"/>
<dbReference type="UniPathway" id="UPA00246"/>
<dbReference type="Proteomes" id="UP000001868">
    <property type="component" value="Chromosome"/>
</dbReference>
<dbReference type="GO" id="GO:0008880">
    <property type="term" value="F:glucuronate isomerase activity"/>
    <property type="evidence" value="ECO:0007669"/>
    <property type="project" value="UniProtKB-UniRule"/>
</dbReference>
<dbReference type="GO" id="GO:0019698">
    <property type="term" value="P:D-galacturonate catabolic process"/>
    <property type="evidence" value="ECO:0007669"/>
    <property type="project" value="TreeGrafter"/>
</dbReference>
<dbReference type="GO" id="GO:0042840">
    <property type="term" value="P:D-glucuronate catabolic process"/>
    <property type="evidence" value="ECO:0007669"/>
    <property type="project" value="TreeGrafter"/>
</dbReference>
<dbReference type="Gene3D" id="3.20.20.140">
    <property type="entry name" value="Metal-dependent hydrolases"/>
    <property type="match status" value="1"/>
</dbReference>
<dbReference type="Gene3D" id="1.10.2020.10">
    <property type="entry name" value="uronate isomerase, domain 2, chain A"/>
    <property type="match status" value="1"/>
</dbReference>
<dbReference type="HAMAP" id="MF_00675">
    <property type="entry name" value="UxaC"/>
    <property type="match status" value="1"/>
</dbReference>
<dbReference type="InterPro" id="IPR032466">
    <property type="entry name" value="Metal_Hydrolase"/>
</dbReference>
<dbReference type="InterPro" id="IPR003766">
    <property type="entry name" value="Uronate_isomerase"/>
</dbReference>
<dbReference type="NCBIfam" id="NF002794">
    <property type="entry name" value="PRK02925.1"/>
    <property type="match status" value="1"/>
</dbReference>
<dbReference type="PANTHER" id="PTHR30068">
    <property type="entry name" value="URONATE ISOMERASE"/>
    <property type="match status" value="1"/>
</dbReference>
<dbReference type="PANTHER" id="PTHR30068:SF4">
    <property type="entry name" value="URONATE ISOMERASE"/>
    <property type="match status" value="1"/>
</dbReference>
<dbReference type="Pfam" id="PF02614">
    <property type="entry name" value="UxaC"/>
    <property type="match status" value="1"/>
</dbReference>
<dbReference type="SUPFAM" id="SSF51556">
    <property type="entry name" value="Metallo-dependent hydrolases"/>
    <property type="match status" value="1"/>
</dbReference>
<gene>
    <name evidence="1" type="primary">uxaC</name>
    <name type="ordered locus">PHZ_c2452</name>
</gene>